<proteinExistence type="inferred from homology"/>
<name>UREE_STRTD</name>
<evidence type="ECO:0000255" key="1">
    <source>
        <dbReference type="HAMAP-Rule" id="MF_00822"/>
    </source>
</evidence>
<gene>
    <name evidence="1" type="primary">ureE</name>
    <name type="ordered locus">STER_0326</name>
</gene>
<sequence length="150" mass="16956">MIFTKVDALVKDIDVDKYHIETVILSSDDLNKKIIRVKSDHGNEFGIRLDKGQKLQNGSAFFIDDHHVLAIGVESQDLIVISPKDMDEMGITAHILGNTHKPIEVKDAKIYLEVDPVVEQVLTQKEIAYTIEEVVLDKPLRHVNLTAHEH</sequence>
<accession>Q03ME2</accession>
<comment type="function">
    <text evidence="1">Involved in urease metallocenter assembly. Binds nickel. Probably functions as a nickel donor during metallocenter assembly.</text>
</comment>
<comment type="subcellular location">
    <subcellularLocation>
        <location evidence="1">Cytoplasm</location>
    </subcellularLocation>
</comment>
<comment type="similarity">
    <text evidence="1">Belongs to the UreE family.</text>
</comment>
<protein>
    <recommendedName>
        <fullName evidence="1">Urease accessory protein UreE</fullName>
    </recommendedName>
</protein>
<feature type="chain" id="PRO_1000062565" description="Urease accessory protein UreE">
    <location>
        <begin position="1"/>
        <end position="150"/>
    </location>
</feature>
<organism>
    <name type="scientific">Streptococcus thermophilus (strain ATCC BAA-491 / LMD-9)</name>
    <dbReference type="NCBI Taxonomy" id="322159"/>
    <lineage>
        <taxon>Bacteria</taxon>
        <taxon>Bacillati</taxon>
        <taxon>Bacillota</taxon>
        <taxon>Bacilli</taxon>
        <taxon>Lactobacillales</taxon>
        <taxon>Streptococcaceae</taxon>
        <taxon>Streptococcus</taxon>
    </lineage>
</organism>
<keyword id="KW-0143">Chaperone</keyword>
<keyword id="KW-0963">Cytoplasm</keyword>
<keyword id="KW-0533">Nickel</keyword>
<keyword id="KW-0996">Nickel insertion</keyword>
<dbReference type="EMBL" id="CP000419">
    <property type="protein sequence ID" value="ABJ65630.1"/>
    <property type="molecule type" value="Genomic_DNA"/>
</dbReference>
<dbReference type="RefSeq" id="WP_002949549.1">
    <property type="nucleotide sequence ID" value="NZ_CP086001.1"/>
</dbReference>
<dbReference type="SMR" id="Q03ME2"/>
<dbReference type="GeneID" id="93791473"/>
<dbReference type="KEGG" id="ste:STER_0326"/>
<dbReference type="HOGENOM" id="CLU_093757_3_1_9"/>
<dbReference type="GO" id="GO:0005737">
    <property type="term" value="C:cytoplasm"/>
    <property type="evidence" value="ECO:0007669"/>
    <property type="project" value="UniProtKB-SubCell"/>
</dbReference>
<dbReference type="GO" id="GO:0016151">
    <property type="term" value="F:nickel cation binding"/>
    <property type="evidence" value="ECO:0007669"/>
    <property type="project" value="UniProtKB-UniRule"/>
</dbReference>
<dbReference type="GO" id="GO:0051082">
    <property type="term" value="F:unfolded protein binding"/>
    <property type="evidence" value="ECO:0007669"/>
    <property type="project" value="UniProtKB-UniRule"/>
</dbReference>
<dbReference type="GO" id="GO:0006457">
    <property type="term" value="P:protein folding"/>
    <property type="evidence" value="ECO:0007669"/>
    <property type="project" value="InterPro"/>
</dbReference>
<dbReference type="GO" id="GO:0065003">
    <property type="term" value="P:protein-containing complex assembly"/>
    <property type="evidence" value="ECO:0007669"/>
    <property type="project" value="InterPro"/>
</dbReference>
<dbReference type="GO" id="GO:0019627">
    <property type="term" value="P:urea metabolic process"/>
    <property type="evidence" value="ECO:0007669"/>
    <property type="project" value="InterPro"/>
</dbReference>
<dbReference type="CDD" id="cd00571">
    <property type="entry name" value="UreE"/>
    <property type="match status" value="1"/>
</dbReference>
<dbReference type="Gene3D" id="2.60.260.20">
    <property type="entry name" value="Urease metallochaperone UreE, N-terminal domain"/>
    <property type="match status" value="1"/>
</dbReference>
<dbReference type="Gene3D" id="3.30.70.790">
    <property type="entry name" value="UreE, C-terminal domain"/>
    <property type="match status" value="1"/>
</dbReference>
<dbReference type="HAMAP" id="MF_00822">
    <property type="entry name" value="UreE"/>
    <property type="match status" value="1"/>
</dbReference>
<dbReference type="InterPro" id="IPR012406">
    <property type="entry name" value="UreE"/>
</dbReference>
<dbReference type="InterPro" id="IPR007864">
    <property type="entry name" value="UreE_C_dom"/>
</dbReference>
<dbReference type="InterPro" id="IPR004029">
    <property type="entry name" value="UreE_N"/>
</dbReference>
<dbReference type="InterPro" id="IPR036118">
    <property type="entry name" value="UreE_N_sf"/>
</dbReference>
<dbReference type="NCBIfam" id="NF009759">
    <property type="entry name" value="PRK13261.2-5"/>
    <property type="match status" value="1"/>
</dbReference>
<dbReference type="Pfam" id="PF05194">
    <property type="entry name" value="UreE_C"/>
    <property type="match status" value="1"/>
</dbReference>
<dbReference type="Pfam" id="PF02814">
    <property type="entry name" value="UreE_N"/>
    <property type="match status" value="1"/>
</dbReference>
<dbReference type="PIRSF" id="PIRSF036402">
    <property type="entry name" value="Ureas_acces_UreE"/>
    <property type="match status" value="1"/>
</dbReference>
<dbReference type="SMART" id="SM00988">
    <property type="entry name" value="UreE_N"/>
    <property type="match status" value="1"/>
</dbReference>
<dbReference type="SUPFAM" id="SSF69737">
    <property type="entry name" value="Urease metallochaperone UreE, C-terminal domain"/>
    <property type="match status" value="1"/>
</dbReference>
<dbReference type="SUPFAM" id="SSF69287">
    <property type="entry name" value="Urease metallochaperone UreE, N-terminal domain"/>
    <property type="match status" value="1"/>
</dbReference>
<reference key="1">
    <citation type="journal article" date="2006" name="Proc. Natl. Acad. Sci. U.S.A.">
        <title>Comparative genomics of the lactic acid bacteria.</title>
        <authorList>
            <person name="Makarova K.S."/>
            <person name="Slesarev A."/>
            <person name="Wolf Y.I."/>
            <person name="Sorokin A."/>
            <person name="Mirkin B."/>
            <person name="Koonin E.V."/>
            <person name="Pavlov A."/>
            <person name="Pavlova N."/>
            <person name="Karamychev V."/>
            <person name="Polouchine N."/>
            <person name="Shakhova V."/>
            <person name="Grigoriev I."/>
            <person name="Lou Y."/>
            <person name="Rohksar D."/>
            <person name="Lucas S."/>
            <person name="Huang K."/>
            <person name="Goodstein D.M."/>
            <person name="Hawkins T."/>
            <person name="Plengvidhya V."/>
            <person name="Welker D."/>
            <person name="Hughes J."/>
            <person name="Goh Y."/>
            <person name="Benson A."/>
            <person name="Baldwin K."/>
            <person name="Lee J.-H."/>
            <person name="Diaz-Muniz I."/>
            <person name="Dosti B."/>
            <person name="Smeianov V."/>
            <person name="Wechter W."/>
            <person name="Barabote R."/>
            <person name="Lorca G."/>
            <person name="Altermann E."/>
            <person name="Barrangou R."/>
            <person name="Ganesan B."/>
            <person name="Xie Y."/>
            <person name="Rawsthorne H."/>
            <person name="Tamir D."/>
            <person name="Parker C."/>
            <person name="Breidt F."/>
            <person name="Broadbent J.R."/>
            <person name="Hutkins R."/>
            <person name="O'Sullivan D."/>
            <person name="Steele J."/>
            <person name="Unlu G."/>
            <person name="Saier M.H. Jr."/>
            <person name="Klaenhammer T."/>
            <person name="Richardson P."/>
            <person name="Kozyavkin S."/>
            <person name="Weimer B.C."/>
            <person name="Mills D.A."/>
        </authorList>
    </citation>
    <scope>NUCLEOTIDE SEQUENCE [LARGE SCALE GENOMIC DNA]</scope>
    <source>
        <strain>ATCC BAA-491 / LMD-9</strain>
    </source>
</reference>